<evidence type="ECO:0000255" key="1">
    <source>
        <dbReference type="HAMAP-Rule" id="MF_00508"/>
    </source>
</evidence>
<evidence type="ECO:0000305" key="2"/>
<comment type="function">
    <text evidence="1">Involved in the binding of tRNA to the ribosomes.</text>
</comment>
<comment type="subunit">
    <text evidence="1">Part of the 30S ribosomal subunit.</text>
</comment>
<comment type="similarity">
    <text evidence="1">Belongs to the universal ribosomal protein uS10 family.</text>
</comment>
<feature type="chain" id="PRO_1000081549" description="Small ribosomal subunit protein uS10">
    <location>
        <begin position="1"/>
        <end position="101"/>
    </location>
</feature>
<protein>
    <recommendedName>
        <fullName evidence="1">Small ribosomal subunit protein uS10</fullName>
    </recommendedName>
    <alternativeName>
        <fullName evidence="2">30S ribosomal protein S10</fullName>
    </alternativeName>
</protein>
<proteinExistence type="inferred from homology"/>
<sequence>MSQKIRIKLKSYDHMLVDKSAEKIVKTVKTTGAVVTGPIPLPTHKKLFTVLRSPHVNKKAREQFEVMSYKRLIDIYSSSSKTIDALMKLELPSGVEVEIKV</sequence>
<name>RS10_FLAJ1</name>
<organism>
    <name type="scientific">Flavobacterium johnsoniae (strain ATCC 17061 / DSM 2064 / JCM 8514 / BCRC 14874 / CCUG 350202 / NBRC 14942 / NCIMB 11054 / UW101)</name>
    <name type="common">Cytophaga johnsonae</name>
    <dbReference type="NCBI Taxonomy" id="376686"/>
    <lineage>
        <taxon>Bacteria</taxon>
        <taxon>Pseudomonadati</taxon>
        <taxon>Bacteroidota</taxon>
        <taxon>Flavobacteriia</taxon>
        <taxon>Flavobacteriales</taxon>
        <taxon>Flavobacteriaceae</taxon>
        <taxon>Flavobacterium</taxon>
    </lineage>
</organism>
<accession>A5FMY2</accession>
<reference key="1">
    <citation type="journal article" date="2009" name="Appl. Environ. Microbiol.">
        <title>Novel features of the polysaccharide-digesting gliding bacterium Flavobacterium johnsoniae as revealed by genome sequence analysis.</title>
        <authorList>
            <person name="McBride M.J."/>
            <person name="Xie G."/>
            <person name="Martens E.C."/>
            <person name="Lapidus A."/>
            <person name="Henrissat B."/>
            <person name="Rhodes R.G."/>
            <person name="Goltsman E."/>
            <person name="Wang W."/>
            <person name="Xu J."/>
            <person name="Hunnicutt D.W."/>
            <person name="Staroscik A.M."/>
            <person name="Hoover T.R."/>
            <person name="Cheng Y.Q."/>
            <person name="Stein J.L."/>
        </authorList>
    </citation>
    <scope>NUCLEOTIDE SEQUENCE [LARGE SCALE GENOMIC DNA]</scope>
    <source>
        <strain>ATCC 17061 / DSM 2064 / JCM 8514 / BCRC 14874 / CCUG 350202 / NBRC 14942 / NCIMB 11054 / UW101</strain>
    </source>
</reference>
<gene>
    <name evidence="1" type="primary">rpsJ</name>
    <name type="ordered locus">Fjoh_0398</name>
</gene>
<dbReference type="EMBL" id="CP000685">
    <property type="protein sequence ID" value="ABQ03434.1"/>
    <property type="molecule type" value="Genomic_DNA"/>
</dbReference>
<dbReference type="RefSeq" id="WP_007803605.1">
    <property type="nucleotide sequence ID" value="NZ_MUGZ01000005.1"/>
</dbReference>
<dbReference type="SMR" id="A5FMY2"/>
<dbReference type="STRING" id="376686.Fjoh_0398"/>
<dbReference type="KEGG" id="fjo:Fjoh_0398"/>
<dbReference type="eggNOG" id="COG0051">
    <property type="taxonomic scope" value="Bacteria"/>
</dbReference>
<dbReference type="HOGENOM" id="CLU_122625_1_3_10"/>
<dbReference type="OrthoDB" id="9804464at2"/>
<dbReference type="Proteomes" id="UP000006694">
    <property type="component" value="Chromosome"/>
</dbReference>
<dbReference type="GO" id="GO:1990904">
    <property type="term" value="C:ribonucleoprotein complex"/>
    <property type="evidence" value="ECO:0007669"/>
    <property type="project" value="UniProtKB-KW"/>
</dbReference>
<dbReference type="GO" id="GO:0005840">
    <property type="term" value="C:ribosome"/>
    <property type="evidence" value="ECO:0007669"/>
    <property type="project" value="UniProtKB-KW"/>
</dbReference>
<dbReference type="GO" id="GO:0003735">
    <property type="term" value="F:structural constituent of ribosome"/>
    <property type="evidence" value="ECO:0007669"/>
    <property type="project" value="InterPro"/>
</dbReference>
<dbReference type="GO" id="GO:0000049">
    <property type="term" value="F:tRNA binding"/>
    <property type="evidence" value="ECO:0007669"/>
    <property type="project" value="UniProtKB-UniRule"/>
</dbReference>
<dbReference type="GO" id="GO:0006412">
    <property type="term" value="P:translation"/>
    <property type="evidence" value="ECO:0007669"/>
    <property type="project" value="UniProtKB-UniRule"/>
</dbReference>
<dbReference type="FunFam" id="3.30.70.600:FF:000003">
    <property type="entry name" value="30S ribosomal protein S10"/>
    <property type="match status" value="1"/>
</dbReference>
<dbReference type="Gene3D" id="3.30.70.600">
    <property type="entry name" value="Ribosomal protein S10 domain"/>
    <property type="match status" value="1"/>
</dbReference>
<dbReference type="HAMAP" id="MF_00508">
    <property type="entry name" value="Ribosomal_uS10"/>
    <property type="match status" value="1"/>
</dbReference>
<dbReference type="InterPro" id="IPR001848">
    <property type="entry name" value="Ribosomal_uS10"/>
</dbReference>
<dbReference type="InterPro" id="IPR018268">
    <property type="entry name" value="Ribosomal_uS10_CS"/>
</dbReference>
<dbReference type="InterPro" id="IPR027486">
    <property type="entry name" value="Ribosomal_uS10_dom"/>
</dbReference>
<dbReference type="InterPro" id="IPR036838">
    <property type="entry name" value="Ribosomal_uS10_dom_sf"/>
</dbReference>
<dbReference type="NCBIfam" id="NF001861">
    <property type="entry name" value="PRK00596.1"/>
    <property type="match status" value="1"/>
</dbReference>
<dbReference type="NCBIfam" id="TIGR01049">
    <property type="entry name" value="rpsJ_bact"/>
    <property type="match status" value="1"/>
</dbReference>
<dbReference type="PANTHER" id="PTHR11700">
    <property type="entry name" value="30S RIBOSOMAL PROTEIN S10 FAMILY MEMBER"/>
    <property type="match status" value="1"/>
</dbReference>
<dbReference type="Pfam" id="PF00338">
    <property type="entry name" value="Ribosomal_S10"/>
    <property type="match status" value="1"/>
</dbReference>
<dbReference type="PRINTS" id="PR00971">
    <property type="entry name" value="RIBOSOMALS10"/>
</dbReference>
<dbReference type="SMART" id="SM01403">
    <property type="entry name" value="Ribosomal_S10"/>
    <property type="match status" value="1"/>
</dbReference>
<dbReference type="SUPFAM" id="SSF54999">
    <property type="entry name" value="Ribosomal protein S10"/>
    <property type="match status" value="1"/>
</dbReference>
<dbReference type="PROSITE" id="PS00361">
    <property type="entry name" value="RIBOSOMAL_S10"/>
    <property type="match status" value="1"/>
</dbReference>
<keyword id="KW-0687">Ribonucleoprotein</keyword>
<keyword id="KW-0689">Ribosomal protein</keyword>